<reference key="1">
    <citation type="journal article" date="2004" name="Nat. Genet.">
        <title>Comparison of genome degradation in Paratyphi A and Typhi, human-restricted serovars of Salmonella enterica that cause typhoid.</title>
        <authorList>
            <person name="McClelland M."/>
            <person name="Sanderson K.E."/>
            <person name="Clifton S.W."/>
            <person name="Latreille P."/>
            <person name="Porwollik S."/>
            <person name="Sabo A."/>
            <person name="Meyer R."/>
            <person name="Bieri T."/>
            <person name="Ozersky P."/>
            <person name="McLellan M."/>
            <person name="Harkins C.R."/>
            <person name="Wang C."/>
            <person name="Nguyen C."/>
            <person name="Berghoff A."/>
            <person name="Elliott G."/>
            <person name="Kohlberg S."/>
            <person name="Strong C."/>
            <person name="Du F."/>
            <person name="Carter J."/>
            <person name="Kremizki C."/>
            <person name="Layman D."/>
            <person name="Leonard S."/>
            <person name="Sun H."/>
            <person name="Fulton L."/>
            <person name="Nash W."/>
            <person name="Miner T."/>
            <person name="Minx P."/>
            <person name="Delehaunty K."/>
            <person name="Fronick C."/>
            <person name="Magrini V."/>
            <person name="Nhan M."/>
            <person name="Warren W."/>
            <person name="Florea L."/>
            <person name="Spieth J."/>
            <person name="Wilson R.K."/>
        </authorList>
    </citation>
    <scope>NUCLEOTIDE SEQUENCE [LARGE SCALE GENOMIC DNA]</scope>
    <source>
        <strain>ATCC 9150 / SARB42</strain>
    </source>
</reference>
<dbReference type="EMBL" id="CP000026">
    <property type="protein sequence ID" value="AAV77350.1"/>
    <property type="molecule type" value="Genomic_DNA"/>
</dbReference>
<dbReference type="SMR" id="Q5PH01"/>
<dbReference type="KEGG" id="spt:SPA1409"/>
<dbReference type="HOGENOM" id="CLU_083287_18_2_6"/>
<dbReference type="Proteomes" id="UP000008185">
    <property type="component" value="Chromosome"/>
</dbReference>
<dbReference type="GO" id="GO:0003677">
    <property type="term" value="F:DNA binding"/>
    <property type="evidence" value="ECO:0007669"/>
    <property type="project" value="UniProtKB-UniRule"/>
</dbReference>
<dbReference type="GO" id="GO:0003700">
    <property type="term" value="F:DNA-binding transcription factor activity"/>
    <property type="evidence" value="ECO:0007669"/>
    <property type="project" value="UniProtKB-UniRule"/>
</dbReference>
<dbReference type="GO" id="GO:0006950">
    <property type="term" value="P:response to stress"/>
    <property type="evidence" value="ECO:0007669"/>
    <property type="project" value="TreeGrafter"/>
</dbReference>
<dbReference type="FunFam" id="1.10.10.10:FF:000261">
    <property type="entry name" value="Transcriptional regulator SlyA"/>
    <property type="match status" value="1"/>
</dbReference>
<dbReference type="Gene3D" id="1.10.10.10">
    <property type="entry name" value="Winged helix-like DNA-binding domain superfamily/Winged helix DNA-binding domain"/>
    <property type="match status" value="1"/>
</dbReference>
<dbReference type="HAMAP" id="MF_01819">
    <property type="entry name" value="HTH_type_SlyA"/>
    <property type="match status" value="1"/>
</dbReference>
<dbReference type="InterPro" id="IPR000835">
    <property type="entry name" value="HTH_MarR-typ"/>
</dbReference>
<dbReference type="InterPro" id="IPR039422">
    <property type="entry name" value="MarR/SlyA-like"/>
</dbReference>
<dbReference type="InterPro" id="IPR023187">
    <property type="entry name" value="Tscrpt_reg_MarR-type_CS"/>
</dbReference>
<dbReference type="InterPro" id="IPR023071">
    <property type="entry name" value="Tscrpt_reg_SlyA"/>
</dbReference>
<dbReference type="InterPro" id="IPR036388">
    <property type="entry name" value="WH-like_DNA-bd_sf"/>
</dbReference>
<dbReference type="InterPro" id="IPR036390">
    <property type="entry name" value="WH_DNA-bd_sf"/>
</dbReference>
<dbReference type="NCBIfam" id="NF002926">
    <property type="entry name" value="PRK03573.1"/>
    <property type="match status" value="1"/>
</dbReference>
<dbReference type="PANTHER" id="PTHR33164:SF64">
    <property type="entry name" value="TRANSCRIPTIONAL REGULATOR SLYA"/>
    <property type="match status" value="1"/>
</dbReference>
<dbReference type="PANTHER" id="PTHR33164">
    <property type="entry name" value="TRANSCRIPTIONAL REGULATOR, MARR FAMILY"/>
    <property type="match status" value="1"/>
</dbReference>
<dbReference type="Pfam" id="PF01047">
    <property type="entry name" value="MarR"/>
    <property type="match status" value="1"/>
</dbReference>
<dbReference type="PRINTS" id="PR00598">
    <property type="entry name" value="HTHMARR"/>
</dbReference>
<dbReference type="SMART" id="SM00347">
    <property type="entry name" value="HTH_MARR"/>
    <property type="match status" value="1"/>
</dbReference>
<dbReference type="SUPFAM" id="SSF46785">
    <property type="entry name" value="Winged helix' DNA-binding domain"/>
    <property type="match status" value="1"/>
</dbReference>
<dbReference type="PROSITE" id="PS01117">
    <property type="entry name" value="HTH_MARR_1"/>
    <property type="match status" value="1"/>
</dbReference>
<dbReference type="PROSITE" id="PS50995">
    <property type="entry name" value="HTH_MARR_2"/>
    <property type="match status" value="1"/>
</dbReference>
<gene>
    <name evidence="1" type="primary">slyA</name>
    <name type="ordered locus">SPA1409</name>
</gene>
<name>SLYA_SALPA</name>
<sequence>MESPLGSDLARLVRIWRALIDHRLKPLELTQTHWVTLHNIHQLPPDQSQIQLAKAIGIEQPSLVRTLDQLEDKGLISRQTCASDRRAKRIKLTEKAEPLIAEMEEVIHKTRGEILAGISSEEIELLIKLVAKLEHNIMELHSHD</sequence>
<accession>Q5PH01</accession>
<feature type="chain" id="PRO_1000070354" description="Transcriptional regulator SlyA">
    <location>
        <begin position="1"/>
        <end position="144"/>
    </location>
</feature>
<feature type="domain" description="HTH marR-type" evidence="1">
    <location>
        <begin position="2"/>
        <end position="135"/>
    </location>
</feature>
<feature type="DNA-binding region" description="H-T-H motif" evidence="1">
    <location>
        <begin position="49"/>
        <end position="72"/>
    </location>
</feature>
<organism>
    <name type="scientific">Salmonella paratyphi A (strain ATCC 9150 / SARB42)</name>
    <dbReference type="NCBI Taxonomy" id="295319"/>
    <lineage>
        <taxon>Bacteria</taxon>
        <taxon>Pseudomonadati</taxon>
        <taxon>Pseudomonadota</taxon>
        <taxon>Gammaproteobacteria</taxon>
        <taxon>Enterobacterales</taxon>
        <taxon>Enterobacteriaceae</taxon>
        <taxon>Salmonella</taxon>
    </lineage>
</organism>
<proteinExistence type="inferred from homology"/>
<protein>
    <recommendedName>
        <fullName evidence="1">Transcriptional regulator SlyA</fullName>
    </recommendedName>
</protein>
<evidence type="ECO:0000255" key="1">
    <source>
        <dbReference type="HAMAP-Rule" id="MF_01819"/>
    </source>
</evidence>
<comment type="function">
    <text evidence="1">Transcription regulator that can specifically activate or repress expression of target genes.</text>
</comment>
<comment type="subunit">
    <text evidence="1">Homodimer.</text>
</comment>
<comment type="similarity">
    <text evidence="1">Belongs to the SlyA family.</text>
</comment>
<keyword id="KW-0010">Activator</keyword>
<keyword id="KW-0238">DNA-binding</keyword>
<keyword id="KW-0678">Repressor</keyword>
<keyword id="KW-0804">Transcription</keyword>
<keyword id="KW-0805">Transcription regulation</keyword>